<keyword id="KW-0067">ATP-binding</keyword>
<keyword id="KW-0436">Ligase</keyword>
<keyword id="KW-0547">Nucleotide-binding</keyword>
<keyword id="KW-0658">Purine biosynthesis</keyword>
<gene>
    <name evidence="1" type="primary">purC</name>
    <name type="ordered locus">CLK_2273</name>
</gene>
<protein>
    <recommendedName>
        <fullName evidence="1">Phosphoribosylaminoimidazole-succinocarboxamide synthase</fullName>
        <ecNumber evidence="1">6.3.2.6</ecNumber>
    </recommendedName>
    <alternativeName>
        <fullName evidence="1">SAICAR synthetase</fullName>
    </alternativeName>
</protein>
<name>PUR7_CLOBM</name>
<dbReference type="EC" id="6.3.2.6" evidence="1"/>
<dbReference type="EMBL" id="CP000962">
    <property type="protein sequence ID" value="ACA54107.1"/>
    <property type="molecule type" value="Genomic_DNA"/>
</dbReference>
<dbReference type="RefSeq" id="WP_012342253.1">
    <property type="nucleotide sequence ID" value="NC_010520.1"/>
</dbReference>
<dbReference type="SMR" id="B1KZ59"/>
<dbReference type="KEGG" id="cbl:CLK_2273"/>
<dbReference type="HOGENOM" id="CLU_061495_2_0_9"/>
<dbReference type="UniPathway" id="UPA00074">
    <property type="reaction ID" value="UER00131"/>
</dbReference>
<dbReference type="GO" id="GO:0005524">
    <property type="term" value="F:ATP binding"/>
    <property type="evidence" value="ECO:0007669"/>
    <property type="project" value="UniProtKB-KW"/>
</dbReference>
<dbReference type="GO" id="GO:0004639">
    <property type="term" value="F:phosphoribosylaminoimidazolesuccinocarboxamide synthase activity"/>
    <property type="evidence" value="ECO:0007669"/>
    <property type="project" value="UniProtKB-UniRule"/>
</dbReference>
<dbReference type="GO" id="GO:0006189">
    <property type="term" value="P:'de novo' IMP biosynthetic process"/>
    <property type="evidence" value="ECO:0007669"/>
    <property type="project" value="UniProtKB-UniRule"/>
</dbReference>
<dbReference type="GO" id="GO:0009236">
    <property type="term" value="P:cobalamin biosynthetic process"/>
    <property type="evidence" value="ECO:0007669"/>
    <property type="project" value="InterPro"/>
</dbReference>
<dbReference type="CDD" id="cd01415">
    <property type="entry name" value="SAICAR_synt_PurC"/>
    <property type="match status" value="1"/>
</dbReference>
<dbReference type="FunFam" id="3.30.200.20:FF:000189">
    <property type="entry name" value="Phosphoribosylaminoimidazole-succinocarboxamide synthase"/>
    <property type="match status" value="1"/>
</dbReference>
<dbReference type="FunFam" id="3.30.470.20:FF:000006">
    <property type="entry name" value="Phosphoribosylaminoimidazole-succinocarboxamide synthase"/>
    <property type="match status" value="1"/>
</dbReference>
<dbReference type="Gene3D" id="3.30.470.20">
    <property type="entry name" value="ATP-grasp fold, B domain"/>
    <property type="match status" value="1"/>
</dbReference>
<dbReference type="Gene3D" id="3.30.200.20">
    <property type="entry name" value="Phosphorylase Kinase, domain 1"/>
    <property type="match status" value="1"/>
</dbReference>
<dbReference type="HAMAP" id="MF_00137">
    <property type="entry name" value="SAICAR_synth"/>
    <property type="match status" value="1"/>
</dbReference>
<dbReference type="InterPro" id="IPR028923">
    <property type="entry name" value="SAICAR_synt/ADE2_N"/>
</dbReference>
<dbReference type="InterPro" id="IPR033934">
    <property type="entry name" value="SAICAR_synt_PurC"/>
</dbReference>
<dbReference type="InterPro" id="IPR001636">
    <property type="entry name" value="SAICAR_synth"/>
</dbReference>
<dbReference type="InterPro" id="IPR050089">
    <property type="entry name" value="SAICAR_synthetase"/>
</dbReference>
<dbReference type="InterPro" id="IPR018236">
    <property type="entry name" value="SAICAR_synthetase_CS"/>
</dbReference>
<dbReference type="NCBIfam" id="TIGR00081">
    <property type="entry name" value="purC"/>
    <property type="match status" value="1"/>
</dbReference>
<dbReference type="PANTHER" id="PTHR43599">
    <property type="entry name" value="MULTIFUNCTIONAL PROTEIN ADE2"/>
    <property type="match status" value="1"/>
</dbReference>
<dbReference type="PANTHER" id="PTHR43599:SF3">
    <property type="entry name" value="SI:DKEY-6E2.2"/>
    <property type="match status" value="1"/>
</dbReference>
<dbReference type="Pfam" id="PF01259">
    <property type="entry name" value="SAICAR_synt"/>
    <property type="match status" value="1"/>
</dbReference>
<dbReference type="SUPFAM" id="SSF56104">
    <property type="entry name" value="SAICAR synthase-like"/>
    <property type="match status" value="1"/>
</dbReference>
<dbReference type="PROSITE" id="PS01057">
    <property type="entry name" value="SAICAR_SYNTHETASE_1"/>
    <property type="match status" value="1"/>
</dbReference>
<dbReference type="PROSITE" id="PS01058">
    <property type="entry name" value="SAICAR_SYNTHETASE_2"/>
    <property type="match status" value="1"/>
</dbReference>
<accession>B1KZ59</accession>
<reference key="1">
    <citation type="journal article" date="2007" name="PLoS ONE">
        <title>Analysis of the neurotoxin complex genes in Clostridium botulinum A1-A4 and B1 strains: BoNT/A3, /Ba4 and /B1 clusters are located within plasmids.</title>
        <authorList>
            <person name="Smith T.J."/>
            <person name="Hill K.K."/>
            <person name="Foley B.T."/>
            <person name="Detter J.C."/>
            <person name="Munk A.C."/>
            <person name="Bruce D.C."/>
            <person name="Doggett N.A."/>
            <person name="Smith L.A."/>
            <person name="Marks J.D."/>
            <person name="Xie G."/>
            <person name="Brettin T.S."/>
        </authorList>
    </citation>
    <scope>NUCLEOTIDE SEQUENCE [LARGE SCALE GENOMIC DNA]</scope>
    <source>
        <strain>Loch Maree / Type A3</strain>
    </source>
</reference>
<proteinExistence type="inferred from homology"/>
<organism>
    <name type="scientific">Clostridium botulinum (strain Loch Maree / Type A3)</name>
    <dbReference type="NCBI Taxonomy" id="498214"/>
    <lineage>
        <taxon>Bacteria</taxon>
        <taxon>Bacillati</taxon>
        <taxon>Bacillota</taxon>
        <taxon>Clostridia</taxon>
        <taxon>Eubacteriales</taxon>
        <taxon>Clostridiaceae</taxon>
        <taxon>Clostridium</taxon>
    </lineage>
</organism>
<feature type="chain" id="PRO_1000095976" description="Phosphoribosylaminoimidazole-succinocarboxamide synthase">
    <location>
        <begin position="1"/>
        <end position="234"/>
    </location>
</feature>
<evidence type="ECO:0000255" key="1">
    <source>
        <dbReference type="HAMAP-Rule" id="MF_00137"/>
    </source>
</evidence>
<sequence>MEKKDMLYEGKAKKIFGTDDKDTVVVYYKDDATAFNGEKKGTIEDKGVMNNSITSMLFELLEKKGVKTHFIEKINEREQLCKKVEIVPLEVIVRNIAAGSMAKRLGLSEGRKLDTTVFEISYKNDDLNDPLINDYHAVAIGLTTFEELKEMYSIAEKVNNTLKEFFDKQGIILVDFKIEIGRSRGGLLLADEISPDTCRLWDKKTGEKLDKDRFRRDMGNVKEAYMEILKRVNK</sequence>
<comment type="catalytic activity">
    <reaction evidence="1">
        <text>5-amino-1-(5-phospho-D-ribosyl)imidazole-4-carboxylate + L-aspartate + ATP = (2S)-2-[5-amino-1-(5-phospho-beta-D-ribosyl)imidazole-4-carboxamido]succinate + ADP + phosphate + 2 H(+)</text>
        <dbReference type="Rhea" id="RHEA:22628"/>
        <dbReference type="ChEBI" id="CHEBI:15378"/>
        <dbReference type="ChEBI" id="CHEBI:29991"/>
        <dbReference type="ChEBI" id="CHEBI:30616"/>
        <dbReference type="ChEBI" id="CHEBI:43474"/>
        <dbReference type="ChEBI" id="CHEBI:58443"/>
        <dbReference type="ChEBI" id="CHEBI:77657"/>
        <dbReference type="ChEBI" id="CHEBI:456216"/>
        <dbReference type="EC" id="6.3.2.6"/>
    </reaction>
</comment>
<comment type="pathway">
    <text evidence="1">Purine metabolism; IMP biosynthesis via de novo pathway; 5-amino-1-(5-phospho-D-ribosyl)imidazole-4-carboxamide from 5-amino-1-(5-phospho-D-ribosyl)imidazole-4-carboxylate: step 1/2.</text>
</comment>
<comment type="similarity">
    <text evidence="1">Belongs to the SAICAR synthetase family.</text>
</comment>